<accession>B5QXD6</accession>
<protein>
    <recommendedName>
        <fullName evidence="1">Thymidylate kinase</fullName>
        <ecNumber evidence="1">2.7.4.9</ecNumber>
    </recommendedName>
    <alternativeName>
        <fullName evidence="1">dTMP kinase</fullName>
    </alternativeName>
</protein>
<keyword id="KW-0067">ATP-binding</keyword>
<keyword id="KW-0418">Kinase</keyword>
<keyword id="KW-0545">Nucleotide biosynthesis</keyword>
<keyword id="KW-0547">Nucleotide-binding</keyword>
<keyword id="KW-0808">Transferase</keyword>
<sequence length="213" mass="23738">MGSNYIVIEGLEGAGKTTARDVVVETLEQLGIRNMIFTREPGGTQLAEKLRSLVLDIRSVGDEVITDKAEVLMFYAARVQLVETVIKPALAQGIWVIGDRHDLSTQAYQGGGRGIDQTMLATLRDAVLGDFRPDLTLYLDVTPEVGLKRARARGDLDRIEQESFDFFNRTRARYLELAAQDSRIRTIDATQPLDAVMRDIRATVTKWVQEQAA</sequence>
<gene>
    <name evidence="1" type="primary">tmk</name>
    <name type="ordered locus">SEN1849</name>
</gene>
<feature type="chain" id="PRO_1000097424" description="Thymidylate kinase">
    <location>
        <begin position="1"/>
        <end position="213"/>
    </location>
</feature>
<feature type="binding site" evidence="1">
    <location>
        <begin position="10"/>
        <end position="17"/>
    </location>
    <ligand>
        <name>ATP</name>
        <dbReference type="ChEBI" id="CHEBI:30616"/>
    </ligand>
</feature>
<name>KTHY_SALEP</name>
<proteinExistence type="inferred from homology"/>
<reference key="1">
    <citation type="journal article" date="2008" name="Genome Res.">
        <title>Comparative genome analysis of Salmonella enteritidis PT4 and Salmonella gallinarum 287/91 provides insights into evolutionary and host adaptation pathways.</title>
        <authorList>
            <person name="Thomson N.R."/>
            <person name="Clayton D.J."/>
            <person name="Windhorst D."/>
            <person name="Vernikos G."/>
            <person name="Davidson S."/>
            <person name="Churcher C."/>
            <person name="Quail M.A."/>
            <person name="Stevens M."/>
            <person name="Jones M.A."/>
            <person name="Watson M."/>
            <person name="Barron A."/>
            <person name="Layton A."/>
            <person name="Pickard D."/>
            <person name="Kingsley R.A."/>
            <person name="Bignell A."/>
            <person name="Clark L."/>
            <person name="Harris B."/>
            <person name="Ormond D."/>
            <person name="Abdellah Z."/>
            <person name="Brooks K."/>
            <person name="Cherevach I."/>
            <person name="Chillingworth T."/>
            <person name="Woodward J."/>
            <person name="Norberczak H."/>
            <person name="Lord A."/>
            <person name="Arrowsmith C."/>
            <person name="Jagels K."/>
            <person name="Moule S."/>
            <person name="Mungall K."/>
            <person name="Saunders M."/>
            <person name="Whitehead S."/>
            <person name="Chabalgoity J.A."/>
            <person name="Maskell D."/>
            <person name="Humphreys T."/>
            <person name="Roberts M."/>
            <person name="Barrow P.A."/>
            <person name="Dougan G."/>
            <person name="Parkhill J."/>
        </authorList>
    </citation>
    <scope>NUCLEOTIDE SEQUENCE [LARGE SCALE GENOMIC DNA]</scope>
    <source>
        <strain>P125109</strain>
    </source>
</reference>
<dbReference type="EC" id="2.7.4.9" evidence="1"/>
<dbReference type="EMBL" id="AM933172">
    <property type="protein sequence ID" value="CAR33429.1"/>
    <property type="molecule type" value="Genomic_DNA"/>
</dbReference>
<dbReference type="RefSeq" id="WP_000535396.1">
    <property type="nucleotide sequence ID" value="NC_011294.1"/>
</dbReference>
<dbReference type="SMR" id="B5QXD6"/>
<dbReference type="KEGG" id="set:SEN1849"/>
<dbReference type="HOGENOM" id="CLU_049131_0_1_6"/>
<dbReference type="Proteomes" id="UP000000613">
    <property type="component" value="Chromosome"/>
</dbReference>
<dbReference type="GO" id="GO:0005829">
    <property type="term" value="C:cytosol"/>
    <property type="evidence" value="ECO:0007669"/>
    <property type="project" value="TreeGrafter"/>
</dbReference>
<dbReference type="GO" id="GO:0005524">
    <property type="term" value="F:ATP binding"/>
    <property type="evidence" value="ECO:0007669"/>
    <property type="project" value="UniProtKB-UniRule"/>
</dbReference>
<dbReference type="GO" id="GO:0004798">
    <property type="term" value="F:dTMP kinase activity"/>
    <property type="evidence" value="ECO:0007669"/>
    <property type="project" value="UniProtKB-UniRule"/>
</dbReference>
<dbReference type="GO" id="GO:0006233">
    <property type="term" value="P:dTDP biosynthetic process"/>
    <property type="evidence" value="ECO:0007669"/>
    <property type="project" value="InterPro"/>
</dbReference>
<dbReference type="GO" id="GO:0006235">
    <property type="term" value="P:dTTP biosynthetic process"/>
    <property type="evidence" value="ECO:0007669"/>
    <property type="project" value="UniProtKB-UniRule"/>
</dbReference>
<dbReference type="GO" id="GO:0006227">
    <property type="term" value="P:dUDP biosynthetic process"/>
    <property type="evidence" value="ECO:0007669"/>
    <property type="project" value="TreeGrafter"/>
</dbReference>
<dbReference type="CDD" id="cd01672">
    <property type="entry name" value="TMPK"/>
    <property type="match status" value="1"/>
</dbReference>
<dbReference type="FunFam" id="3.40.50.300:FF:000321">
    <property type="entry name" value="Thymidylate kinase"/>
    <property type="match status" value="1"/>
</dbReference>
<dbReference type="Gene3D" id="3.40.50.300">
    <property type="entry name" value="P-loop containing nucleotide triphosphate hydrolases"/>
    <property type="match status" value="1"/>
</dbReference>
<dbReference type="HAMAP" id="MF_00165">
    <property type="entry name" value="Thymidylate_kinase"/>
    <property type="match status" value="1"/>
</dbReference>
<dbReference type="InterPro" id="IPR027417">
    <property type="entry name" value="P-loop_NTPase"/>
</dbReference>
<dbReference type="InterPro" id="IPR039430">
    <property type="entry name" value="Thymidylate_kin-like_dom"/>
</dbReference>
<dbReference type="InterPro" id="IPR018095">
    <property type="entry name" value="Thymidylate_kin_CS"/>
</dbReference>
<dbReference type="InterPro" id="IPR018094">
    <property type="entry name" value="Thymidylate_kinase"/>
</dbReference>
<dbReference type="NCBIfam" id="TIGR00041">
    <property type="entry name" value="DTMP_kinase"/>
    <property type="match status" value="1"/>
</dbReference>
<dbReference type="PANTHER" id="PTHR10344">
    <property type="entry name" value="THYMIDYLATE KINASE"/>
    <property type="match status" value="1"/>
</dbReference>
<dbReference type="PANTHER" id="PTHR10344:SF4">
    <property type="entry name" value="UMP-CMP KINASE 2, MITOCHONDRIAL"/>
    <property type="match status" value="1"/>
</dbReference>
<dbReference type="Pfam" id="PF02223">
    <property type="entry name" value="Thymidylate_kin"/>
    <property type="match status" value="1"/>
</dbReference>
<dbReference type="SUPFAM" id="SSF52540">
    <property type="entry name" value="P-loop containing nucleoside triphosphate hydrolases"/>
    <property type="match status" value="1"/>
</dbReference>
<dbReference type="PROSITE" id="PS01331">
    <property type="entry name" value="THYMIDYLATE_KINASE"/>
    <property type="match status" value="1"/>
</dbReference>
<organism>
    <name type="scientific">Salmonella enteritidis PT4 (strain P125109)</name>
    <dbReference type="NCBI Taxonomy" id="550537"/>
    <lineage>
        <taxon>Bacteria</taxon>
        <taxon>Pseudomonadati</taxon>
        <taxon>Pseudomonadota</taxon>
        <taxon>Gammaproteobacteria</taxon>
        <taxon>Enterobacterales</taxon>
        <taxon>Enterobacteriaceae</taxon>
        <taxon>Salmonella</taxon>
    </lineage>
</organism>
<evidence type="ECO:0000255" key="1">
    <source>
        <dbReference type="HAMAP-Rule" id="MF_00165"/>
    </source>
</evidence>
<comment type="function">
    <text evidence="1">Phosphorylation of dTMP to form dTDP in both de novo and salvage pathways of dTTP synthesis.</text>
</comment>
<comment type="catalytic activity">
    <reaction evidence="1">
        <text>dTMP + ATP = dTDP + ADP</text>
        <dbReference type="Rhea" id="RHEA:13517"/>
        <dbReference type="ChEBI" id="CHEBI:30616"/>
        <dbReference type="ChEBI" id="CHEBI:58369"/>
        <dbReference type="ChEBI" id="CHEBI:63528"/>
        <dbReference type="ChEBI" id="CHEBI:456216"/>
        <dbReference type="EC" id="2.7.4.9"/>
    </reaction>
</comment>
<comment type="similarity">
    <text evidence="1">Belongs to the thymidylate kinase family.</text>
</comment>